<evidence type="ECO:0000250" key="1"/>
<evidence type="ECO:0000256" key="2">
    <source>
        <dbReference type="SAM" id="MobiDB-lite"/>
    </source>
</evidence>
<evidence type="ECO:0000269" key="3">
    <source>
    </source>
</evidence>
<evidence type="ECO:0000269" key="4">
    <source>
    </source>
</evidence>
<evidence type="ECO:0000269" key="5">
    <source>
    </source>
</evidence>
<evidence type="ECO:0000269" key="6">
    <source>
    </source>
</evidence>
<evidence type="ECO:0000269" key="7">
    <source>
    </source>
</evidence>
<evidence type="ECO:0000305" key="8"/>
<evidence type="ECO:0000305" key="9">
    <source>
    </source>
</evidence>
<evidence type="ECO:0007744" key="10">
    <source>
    </source>
</evidence>
<evidence type="ECO:0007744" key="11">
    <source>
    </source>
</evidence>
<dbReference type="EC" id="2.4.1.14"/>
<dbReference type="EMBL" id="AF296825">
    <property type="status" value="NOT_ANNOTATED_CDS"/>
    <property type="molecule type" value="Genomic_DNA"/>
</dbReference>
<dbReference type="EMBL" id="CP002688">
    <property type="protein sequence ID" value="AED92824.1"/>
    <property type="molecule type" value="Genomic_DNA"/>
</dbReference>
<dbReference type="EMBL" id="AY039911">
    <property type="protein sequence ID" value="AAK64015.1"/>
    <property type="molecule type" value="mRNA"/>
</dbReference>
<dbReference type="EMBL" id="AY079334">
    <property type="protein sequence ID" value="AAL85065.1"/>
    <property type="molecule type" value="mRNA"/>
</dbReference>
<dbReference type="EMBL" id="AK230113">
    <property type="protein sequence ID" value="BAF01930.1"/>
    <property type="molecule type" value="mRNA"/>
</dbReference>
<dbReference type="RefSeq" id="NP_197528.1">
    <property type="nucleotide sequence ID" value="NM_122035.3"/>
</dbReference>
<dbReference type="SMR" id="Q94BT0"/>
<dbReference type="BioGRID" id="17426">
    <property type="interactions" value="8"/>
</dbReference>
<dbReference type="FunCoup" id="Q94BT0">
    <property type="interactions" value="494"/>
</dbReference>
<dbReference type="IntAct" id="Q94BT0">
    <property type="interactions" value="8"/>
</dbReference>
<dbReference type="STRING" id="3702.Q94BT0"/>
<dbReference type="CAZy" id="GT4">
    <property type="family name" value="Glycosyltransferase Family 4"/>
</dbReference>
<dbReference type="iPTMnet" id="Q94BT0"/>
<dbReference type="PaxDb" id="3702-AT5G20280.1"/>
<dbReference type="ProteomicsDB" id="228366"/>
<dbReference type="EnsemblPlants" id="AT5G20280.1">
    <property type="protein sequence ID" value="AT5G20280.1"/>
    <property type="gene ID" value="AT5G20280"/>
</dbReference>
<dbReference type="GeneID" id="832150"/>
<dbReference type="Gramene" id="AT5G20280.1">
    <property type="protein sequence ID" value="AT5G20280.1"/>
    <property type="gene ID" value="AT5G20280"/>
</dbReference>
<dbReference type="KEGG" id="ath:AT5G20280"/>
<dbReference type="Araport" id="AT5G20280"/>
<dbReference type="TAIR" id="AT5G20280">
    <property type="gene designation" value="SPS1F"/>
</dbReference>
<dbReference type="eggNOG" id="KOG0853">
    <property type="taxonomic scope" value="Eukaryota"/>
</dbReference>
<dbReference type="HOGENOM" id="CLU_009583_24_0_1"/>
<dbReference type="InParanoid" id="Q94BT0"/>
<dbReference type="OMA" id="CYTFTVK"/>
<dbReference type="OrthoDB" id="512920at2759"/>
<dbReference type="PhylomeDB" id="Q94BT0"/>
<dbReference type="BRENDA" id="2.4.1.14">
    <property type="organism ID" value="399"/>
</dbReference>
<dbReference type="UniPathway" id="UPA00371">
    <property type="reaction ID" value="UER00545"/>
</dbReference>
<dbReference type="PRO" id="PR:Q94BT0"/>
<dbReference type="Proteomes" id="UP000006548">
    <property type="component" value="Chromosome 5"/>
</dbReference>
<dbReference type="ExpressionAtlas" id="Q94BT0">
    <property type="expression patterns" value="baseline and differential"/>
</dbReference>
<dbReference type="GO" id="GO:0005886">
    <property type="term" value="C:plasma membrane"/>
    <property type="evidence" value="ECO:0007005"/>
    <property type="project" value="TAIR"/>
</dbReference>
<dbReference type="GO" id="GO:0009506">
    <property type="term" value="C:plasmodesma"/>
    <property type="evidence" value="ECO:0007005"/>
    <property type="project" value="TAIR"/>
</dbReference>
<dbReference type="GO" id="GO:0046524">
    <property type="term" value="F:sucrose-phosphate synthase activity"/>
    <property type="evidence" value="ECO:0000314"/>
    <property type="project" value="TAIR"/>
</dbReference>
<dbReference type="GO" id="GO:0071836">
    <property type="term" value="P:nectar secretion"/>
    <property type="evidence" value="ECO:0000315"/>
    <property type="project" value="UniProtKB"/>
</dbReference>
<dbReference type="GO" id="GO:0005986">
    <property type="term" value="P:sucrose biosynthetic process"/>
    <property type="evidence" value="ECO:0007669"/>
    <property type="project" value="UniProtKB-UniPathway"/>
</dbReference>
<dbReference type="CDD" id="cd16419">
    <property type="entry name" value="HAD_SPS"/>
    <property type="match status" value="1"/>
</dbReference>
<dbReference type="FunFam" id="3.40.50.2000:FF:000112">
    <property type="entry name" value="Sucrose-phosphate synthase 1"/>
    <property type="match status" value="1"/>
</dbReference>
<dbReference type="FunFam" id="3.40.50.2000:FF:000077">
    <property type="entry name" value="Sucrose-phosphate synthase 2"/>
    <property type="match status" value="1"/>
</dbReference>
<dbReference type="Gene3D" id="3.90.1070.10">
    <property type="match status" value="1"/>
</dbReference>
<dbReference type="Gene3D" id="3.40.50.2000">
    <property type="entry name" value="Glycogen Phosphorylase B"/>
    <property type="match status" value="2"/>
</dbReference>
<dbReference type="Gene3D" id="3.40.50.1000">
    <property type="entry name" value="HAD superfamily/HAD-like"/>
    <property type="match status" value="1"/>
</dbReference>
<dbReference type="InterPro" id="IPR001296">
    <property type="entry name" value="Glyco_trans_1"/>
</dbReference>
<dbReference type="InterPro" id="IPR023214">
    <property type="entry name" value="HAD_sf"/>
</dbReference>
<dbReference type="InterPro" id="IPR006380">
    <property type="entry name" value="SPP-like_dom"/>
</dbReference>
<dbReference type="InterPro" id="IPR044161">
    <property type="entry name" value="SPS"/>
</dbReference>
<dbReference type="InterPro" id="IPR035659">
    <property type="entry name" value="SPS_C"/>
</dbReference>
<dbReference type="InterPro" id="IPR012819">
    <property type="entry name" value="SPS_pln"/>
</dbReference>
<dbReference type="InterPro" id="IPR000368">
    <property type="entry name" value="Sucrose_synth_GT-B1"/>
</dbReference>
<dbReference type="NCBIfam" id="TIGR02468">
    <property type="entry name" value="sucrsPsyn_pln"/>
    <property type="match status" value="1"/>
</dbReference>
<dbReference type="PANTHER" id="PTHR46039:SF2">
    <property type="entry name" value="SUCROSE-PHOSPHATE SYNTHASE 1"/>
    <property type="match status" value="1"/>
</dbReference>
<dbReference type="PANTHER" id="PTHR46039">
    <property type="entry name" value="SUCROSE-PHOSPHATE SYNTHASE 3-RELATED"/>
    <property type="match status" value="1"/>
</dbReference>
<dbReference type="Pfam" id="PF00534">
    <property type="entry name" value="Glycos_transf_1"/>
    <property type="match status" value="1"/>
</dbReference>
<dbReference type="Pfam" id="PF00862">
    <property type="entry name" value="GT-B_Sucrose_synth"/>
    <property type="match status" value="1"/>
</dbReference>
<dbReference type="Pfam" id="PF05116">
    <property type="entry name" value="S6PP"/>
    <property type="match status" value="1"/>
</dbReference>
<dbReference type="SUPFAM" id="SSF53756">
    <property type="entry name" value="UDP-Glycosyltransferase/glycogen phosphorylase"/>
    <property type="match status" value="1"/>
</dbReference>
<protein>
    <recommendedName>
        <fullName>Sucrose-phosphate synthase 1</fullName>
        <ecNumber>2.4.1.14</ecNumber>
    </recommendedName>
    <alternativeName>
        <fullName>Sucrose-phosphate synthase 1F</fullName>
        <shortName>AtSPS1F</shortName>
    </alternativeName>
    <alternativeName>
        <fullName>Sucrose-phosphate synthase 5.1</fullName>
        <shortName>AtSPS5.1</shortName>
    </alternativeName>
    <alternativeName>
        <fullName>UDP-glucose-fructose-phosphate glucosyltransferase</fullName>
    </alternativeName>
</protein>
<proteinExistence type="evidence at protein level"/>
<comment type="function">
    <text evidence="3 4 5 6">Plays a major role in photosynthetic sucrose synthesis by catalyzing the rate-limiting step of sucrose biosynthesis from UDP-glucose and fructose- 6-phosphate. Involved in the regulation of carbon partitioning in the leaves of plants. May regulate the synthesis of sucrose and therefore play a major role as a limiting factor in the export of photoassimilates out of the leaf. Plays a role for sucrose availability that is essential for plant growth and fiber elongation. Required for nectar secretion.</text>
</comment>
<comment type="catalytic activity">
    <reaction>
        <text>beta-D-fructose 6-phosphate + UDP-alpha-D-glucose = sucrose 6(F)-phosphate + UDP + H(+)</text>
        <dbReference type="Rhea" id="RHEA:22172"/>
        <dbReference type="ChEBI" id="CHEBI:15378"/>
        <dbReference type="ChEBI" id="CHEBI:57634"/>
        <dbReference type="ChEBI" id="CHEBI:57723"/>
        <dbReference type="ChEBI" id="CHEBI:58223"/>
        <dbReference type="ChEBI" id="CHEBI:58885"/>
        <dbReference type="EC" id="2.4.1.14"/>
    </reaction>
</comment>
<comment type="activity regulation">
    <text evidence="1">Activity is regulated by phosphorylation and moderated by concentration of metabolites and light.</text>
</comment>
<comment type="pathway">
    <text>Glycan biosynthesis; sucrose biosynthesis; sucrose from D-fructose 6-phosphate and UDP-alpha-D-glucose: step 1/2.</text>
</comment>
<comment type="subunit">
    <text evidence="1">Homodimer or homotetramer.</text>
</comment>
<comment type="tissue specificity">
    <text evidence="5 6">Expressed in seeds, stems, rosette leaves, flowers and siliques. Highly expressed in maturing nectaries.</text>
</comment>
<comment type="induction">
    <text evidence="5">Circadian-regulated, with the highest expression at the end of the light period and the lowest at the end of the dark period (in 12 hours light/12 hours dark cycle). Induced by cold (at protein level).</text>
</comment>
<comment type="PTM">
    <text evidence="7">Phosphorylated at Ser-152 upon sucrose supply.</text>
</comment>
<comment type="disruption phenotype">
    <text evidence="6">Loss of nectar secretion accompanied by starch accumulation in nectaries.</text>
</comment>
<comment type="miscellaneous">
    <text evidence="9">Plants silencing SPS1 show reduced shoot growth, leaf fresh weight and dry weight, and decreased leaf starch, leaf sugar levels and sucrose export rates (PubMed:10998187, PubMed:21309792). Tobacco plants overexpressing Arabidopsis SPS1 show increased stem height and diameter, increased total dry weight and elevated concentrations of sink sucrose pools (PubMed:17415671).</text>
</comment>
<comment type="similarity">
    <text evidence="8">Belongs to the glycosyltransferase 1 family.</text>
</comment>
<organism>
    <name type="scientific">Arabidopsis thaliana</name>
    <name type="common">Mouse-ear cress</name>
    <dbReference type="NCBI Taxonomy" id="3702"/>
    <lineage>
        <taxon>Eukaryota</taxon>
        <taxon>Viridiplantae</taxon>
        <taxon>Streptophyta</taxon>
        <taxon>Embryophyta</taxon>
        <taxon>Tracheophyta</taxon>
        <taxon>Spermatophyta</taxon>
        <taxon>Magnoliopsida</taxon>
        <taxon>eudicotyledons</taxon>
        <taxon>Gunneridae</taxon>
        <taxon>Pentapetalae</taxon>
        <taxon>rosids</taxon>
        <taxon>malvids</taxon>
        <taxon>Brassicales</taxon>
        <taxon>Brassicaceae</taxon>
        <taxon>Camelineae</taxon>
        <taxon>Arabidopsis</taxon>
    </lineage>
</organism>
<reference key="1">
    <citation type="journal article" date="2000" name="Nature">
        <title>Sequence and analysis of chromosome 5 of the plant Arabidopsis thaliana.</title>
        <authorList>
            <person name="Tabata S."/>
            <person name="Kaneko T."/>
            <person name="Nakamura Y."/>
            <person name="Kotani H."/>
            <person name="Kato T."/>
            <person name="Asamizu E."/>
            <person name="Miyajima N."/>
            <person name="Sasamoto S."/>
            <person name="Kimura T."/>
            <person name="Hosouchi T."/>
            <person name="Kawashima K."/>
            <person name="Kohara M."/>
            <person name="Matsumoto M."/>
            <person name="Matsuno A."/>
            <person name="Muraki A."/>
            <person name="Nakayama S."/>
            <person name="Nakazaki N."/>
            <person name="Naruo K."/>
            <person name="Okumura S."/>
            <person name="Shinpo S."/>
            <person name="Takeuchi C."/>
            <person name="Wada T."/>
            <person name="Watanabe A."/>
            <person name="Yamada M."/>
            <person name="Yasuda M."/>
            <person name="Sato S."/>
            <person name="de la Bastide M."/>
            <person name="Huang E."/>
            <person name="Spiegel L."/>
            <person name="Gnoj L."/>
            <person name="O'Shaughnessy A."/>
            <person name="Preston R."/>
            <person name="Habermann K."/>
            <person name="Murray J."/>
            <person name="Johnson D."/>
            <person name="Rohlfing T."/>
            <person name="Nelson J."/>
            <person name="Stoneking T."/>
            <person name="Pepin K."/>
            <person name="Spieth J."/>
            <person name="Sekhon M."/>
            <person name="Armstrong J."/>
            <person name="Becker M."/>
            <person name="Belter E."/>
            <person name="Cordum H."/>
            <person name="Cordes M."/>
            <person name="Courtney L."/>
            <person name="Courtney W."/>
            <person name="Dante M."/>
            <person name="Du H."/>
            <person name="Edwards J."/>
            <person name="Fryman J."/>
            <person name="Haakensen B."/>
            <person name="Lamar E."/>
            <person name="Latreille P."/>
            <person name="Leonard S."/>
            <person name="Meyer R."/>
            <person name="Mulvaney E."/>
            <person name="Ozersky P."/>
            <person name="Riley A."/>
            <person name="Strowmatt C."/>
            <person name="Wagner-McPherson C."/>
            <person name="Wollam A."/>
            <person name="Yoakum M."/>
            <person name="Bell M."/>
            <person name="Dedhia N."/>
            <person name="Parnell L."/>
            <person name="Shah R."/>
            <person name="Rodriguez M."/>
            <person name="Hoon See L."/>
            <person name="Vil D."/>
            <person name="Baker J."/>
            <person name="Kirchoff K."/>
            <person name="Toth K."/>
            <person name="King L."/>
            <person name="Bahret A."/>
            <person name="Miller B."/>
            <person name="Marra M.A."/>
            <person name="Martienssen R."/>
            <person name="McCombie W.R."/>
            <person name="Wilson R.K."/>
            <person name="Murphy G."/>
            <person name="Bancroft I."/>
            <person name="Volckaert G."/>
            <person name="Wambutt R."/>
            <person name="Duesterhoeft A."/>
            <person name="Stiekema W."/>
            <person name="Pohl T."/>
            <person name="Entian K.-D."/>
            <person name="Terryn N."/>
            <person name="Hartley N."/>
            <person name="Bent E."/>
            <person name="Johnson S."/>
            <person name="Langham S.-A."/>
            <person name="McCullagh B."/>
            <person name="Robben J."/>
            <person name="Grymonprez B."/>
            <person name="Zimmermann W."/>
            <person name="Ramsperger U."/>
            <person name="Wedler H."/>
            <person name="Balke K."/>
            <person name="Wedler E."/>
            <person name="Peters S."/>
            <person name="van Staveren M."/>
            <person name="Dirkse W."/>
            <person name="Mooijman P."/>
            <person name="Klein Lankhorst R."/>
            <person name="Weitzenegger T."/>
            <person name="Bothe G."/>
            <person name="Rose M."/>
            <person name="Hauf J."/>
            <person name="Berneiser S."/>
            <person name="Hempel S."/>
            <person name="Feldpausch M."/>
            <person name="Lamberth S."/>
            <person name="Villarroel R."/>
            <person name="Gielen J."/>
            <person name="Ardiles W."/>
            <person name="Bents O."/>
            <person name="Lemcke K."/>
            <person name="Kolesov G."/>
            <person name="Mayer K.F.X."/>
            <person name="Rudd S."/>
            <person name="Schoof H."/>
            <person name="Schueller C."/>
            <person name="Zaccaria P."/>
            <person name="Mewes H.-W."/>
            <person name="Bevan M."/>
            <person name="Fransz P.F."/>
        </authorList>
    </citation>
    <scope>NUCLEOTIDE SEQUENCE [LARGE SCALE GENOMIC DNA]</scope>
    <source>
        <strain>cv. Columbia</strain>
    </source>
</reference>
<reference key="2">
    <citation type="journal article" date="2017" name="Plant J.">
        <title>Araport11: a complete reannotation of the Arabidopsis thaliana reference genome.</title>
        <authorList>
            <person name="Cheng C.Y."/>
            <person name="Krishnakumar V."/>
            <person name="Chan A.P."/>
            <person name="Thibaud-Nissen F."/>
            <person name="Schobel S."/>
            <person name="Town C.D."/>
        </authorList>
    </citation>
    <scope>GENOME REANNOTATION</scope>
    <source>
        <strain>cv. Columbia</strain>
    </source>
</reference>
<reference key="3">
    <citation type="journal article" date="2003" name="Science">
        <title>Empirical analysis of transcriptional activity in the Arabidopsis genome.</title>
        <authorList>
            <person name="Yamada K."/>
            <person name="Lim J."/>
            <person name="Dale J.M."/>
            <person name="Chen H."/>
            <person name="Shinn P."/>
            <person name="Palm C.J."/>
            <person name="Southwick A.M."/>
            <person name="Wu H.C."/>
            <person name="Kim C.J."/>
            <person name="Nguyen M."/>
            <person name="Pham P.K."/>
            <person name="Cheuk R.F."/>
            <person name="Karlin-Newmann G."/>
            <person name="Liu S.X."/>
            <person name="Lam B."/>
            <person name="Sakano H."/>
            <person name="Wu T."/>
            <person name="Yu G."/>
            <person name="Miranda M."/>
            <person name="Quach H.L."/>
            <person name="Tripp M."/>
            <person name="Chang C.H."/>
            <person name="Lee J.M."/>
            <person name="Toriumi M.J."/>
            <person name="Chan M.M."/>
            <person name="Tang C.C."/>
            <person name="Onodera C.S."/>
            <person name="Deng J.M."/>
            <person name="Akiyama K."/>
            <person name="Ansari Y."/>
            <person name="Arakawa T."/>
            <person name="Banh J."/>
            <person name="Banno F."/>
            <person name="Bowser L."/>
            <person name="Brooks S.Y."/>
            <person name="Carninci P."/>
            <person name="Chao Q."/>
            <person name="Choy N."/>
            <person name="Enju A."/>
            <person name="Goldsmith A.D."/>
            <person name="Gurjal M."/>
            <person name="Hansen N.F."/>
            <person name="Hayashizaki Y."/>
            <person name="Johnson-Hopson C."/>
            <person name="Hsuan V.W."/>
            <person name="Iida K."/>
            <person name="Karnes M."/>
            <person name="Khan S."/>
            <person name="Koesema E."/>
            <person name="Ishida J."/>
            <person name="Jiang P.X."/>
            <person name="Jones T."/>
            <person name="Kawai J."/>
            <person name="Kamiya A."/>
            <person name="Meyers C."/>
            <person name="Nakajima M."/>
            <person name="Narusaka M."/>
            <person name="Seki M."/>
            <person name="Sakurai T."/>
            <person name="Satou M."/>
            <person name="Tamse R."/>
            <person name="Vaysberg M."/>
            <person name="Wallender E.K."/>
            <person name="Wong C."/>
            <person name="Yamamura Y."/>
            <person name="Yuan S."/>
            <person name="Shinozaki K."/>
            <person name="Davis R.W."/>
            <person name="Theologis A."/>
            <person name="Ecker J.R."/>
        </authorList>
    </citation>
    <scope>NUCLEOTIDE SEQUENCE [LARGE SCALE MRNA]</scope>
    <source>
        <strain>cv. Columbia</strain>
    </source>
</reference>
<reference key="4">
    <citation type="submission" date="2006-07" db="EMBL/GenBank/DDBJ databases">
        <title>Large-scale analysis of RIKEN Arabidopsis full-length (RAFL) cDNAs.</title>
        <authorList>
            <person name="Totoki Y."/>
            <person name="Seki M."/>
            <person name="Ishida J."/>
            <person name="Nakajima M."/>
            <person name="Enju A."/>
            <person name="Kamiya A."/>
            <person name="Narusaka M."/>
            <person name="Shin-i T."/>
            <person name="Nakagawa M."/>
            <person name="Sakamoto N."/>
            <person name="Oishi K."/>
            <person name="Kohara Y."/>
            <person name="Kobayashi M."/>
            <person name="Toyoda A."/>
            <person name="Sakaki Y."/>
            <person name="Sakurai T."/>
            <person name="Iida K."/>
            <person name="Akiyama K."/>
            <person name="Satou M."/>
            <person name="Toyoda T."/>
            <person name="Konagaya A."/>
            <person name="Carninci P."/>
            <person name="Kawai J."/>
            <person name="Hayashizaki Y."/>
            <person name="Shinozaki K."/>
        </authorList>
    </citation>
    <scope>NUCLEOTIDE SEQUENCE [LARGE SCALE MRNA] OF 586-1043</scope>
    <source>
        <strain>cv. Columbia</strain>
    </source>
</reference>
<reference key="5">
    <citation type="journal article" date="2000" name="Plant J.">
        <title>Decreased expression of two key enzymes in the sucrose biosynthesis pathway, cytosolic fructose-1,6-bisphosphatase and sucrose phosphate synthase, has remarkably different consequences for photosynthetic carbon metabolism in transgenic Arabidopsis thaliana.</title>
        <authorList>
            <person name="Strand A."/>
            <person name="Zrenner R."/>
            <person name="Trevanion S."/>
            <person name="Stitt M."/>
            <person name="Gustafsson P."/>
            <person name="Gardestroem P."/>
        </authorList>
    </citation>
    <scope>FUNCTION</scope>
</reference>
<reference key="6">
    <citation type="journal article" date="2007" name="J. Plant Physiol.">
        <title>Phylogenetic and expression analysis of sucrose phosphate synthase isozymes in plants.</title>
        <authorList>
            <person name="Lutfiyya L.L."/>
            <person name="Xu N."/>
            <person name="D'Ordine R.L."/>
            <person name="Morrell J.A."/>
            <person name="Miller P.W."/>
            <person name="Duff S.M."/>
        </authorList>
    </citation>
    <scope>GENE FAMILY</scope>
</reference>
<reference key="7">
    <citation type="journal article" date="2007" name="Mol. Cell. Proteomics">
        <title>Multidimensional protein identification technology (MudPIT) analysis of ubiquitinated proteins in plants.</title>
        <authorList>
            <person name="Maor R."/>
            <person name="Jones A."/>
            <person name="Nuehse T.S."/>
            <person name="Studholme D.J."/>
            <person name="Peck S.C."/>
            <person name="Shirasu K."/>
        </authorList>
    </citation>
    <scope>IDENTIFICATION BY MASS SPECTROMETRY [LARGE SCALE ANALYSIS]</scope>
    <source>
        <strain>cv. Landsberg erecta</strain>
    </source>
</reference>
<reference key="8">
    <citation type="journal article" date="2008" name="Transgenic Res.">
        <title>Over-expression of an arabidopsis family A sucrose phosphate synthase (SPS) gene alters plant growth and fiber development.</title>
        <authorList>
            <person name="Park J.Y."/>
            <person name="Canam T."/>
            <person name="Kang K.Y."/>
            <person name="Ellis D.D."/>
            <person name="Mansfield S.D."/>
        </authorList>
    </citation>
    <scope>FUNCTION</scope>
</reference>
<reference key="9">
    <citation type="journal article" date="2009" name="J. Proteomics">
        <title>Phosphoproteomic analysis of nuclei-enriched fractions from Arabidopsis thaliana.</title>
        <authorList>
            <person name="Jones A.M.E."/>
            <person name="MacLean D."/>
            <person name="Studholme D.J."/>
            <person name="Serna-Sanz A."/>
            <person name="Andreasson E."/>
            <person name="Rathjen J.P."/>
            <person name="Peck S.C."/>
        </authorList>
    </citation>
    <scope>PHOSPHORYLATION [LARGE SCALE ANALYSIS] AT SER-152 AND SER-155</scope>
    <scope>IDENTIFICATION BY MASS SPECTROMETRY [LARGE SCALE ANALYSIS]</scope>
    <source>
        <strain>cv. Columbia</strain>
    </source>
</reference>
<reference key="10">
    <citation type="journal article" date="2009" name="Plant Physiol.">
        <title>Large-scale Arabidopsis phosphoproteome profiling reveals novel chloroplast kinase substrates and phosphorylation networks.</title>
        <authorList>
            <person name="Reiland S."/>
            <person name="Messerli G."/>
            <person name="Baerenfaller K."/>
            <person name="Gerrits B."/>
            <person name="Endler A."/>
            <person name="Grossmann J."/>
            <person name="Gruissem W."/>
            <person name="Baginsky S."/>
        </authorList>
    </citation>
    <scope>PHOSPHORYLATION [LARGE SCALE ANALYSIS] AT SER-121; SER-125 AND SER-152</scope>
    <scope>IDENTIFICATION BY MASS SPECTROMETRY [LARGE SCALE ANALYSIS]</scope>
</reference>
<reference key="11">
    <citation type="journal article" date="2011" name="Plant Cell Environ.">
        <title>Decrease in leaf sucrose synthesis leads to increased leaf starch turnover and decreased RuBP regeneration-limited photosynthesis but not Rubisco-limited photosynthesis in Arabidopsis null mutants of SPSA1.</title>
        <authorList>
            <person name="Sun J."/>
            <person name="Zhang J."/>
            <person name="Larue C.T."/>
            <person name="Huber S.C."/>
        </authorList>
    </citation>
    <scope>FUNCTION</scope>
    <scope>TISSUE SPECIFICITY</scope>
    <scope>INDUCTION</scope>
</reference>
<reference key="12">
    <citation type="journal article" date="2014" name="J. Proteome Res.">
        <title>A kinase-phosphatase signaling module with BSK8 and BSL2 involved in regulation of sucrose-phosphate synthase.</title>
        <authorList>
            <person name="Wu X."/>
            <person name="Sklodowski K."/>
            <person name="Encke B."/>
            <person name="Schulze W.X."/>
        </authorList>
    </citation>
    <scope>PHOSPHORYLATION AT SER-152</scope>
</reference>
<reference key="13">
    <citation type="journal article" date="2014" name="Nature">
        <title>Nectar secretion requires sucrose phosphate synthases and the sugar transporter SWEET9.</title>
        <authorList>
            <person name="Lin I.W."/>
            <person name="Sosso D."/>
            <person name="Chen L.-Q."/>
            <person name="Gase K."/>
            <person name="Kim S.-G."/>
            <person name="Kessler D."/>
            <person name="Klinkenberg P.M."/>
            <person name="Gorder M.K."/>
            <person name="Hou B.-H."/>
            <person name="Qu X.-Q."/>
            <person name="Carter C.J."/>
            <person name="Baldwin I.T."/>
            <person name="Frommer W.B."/>
        </authorList>
    </citation>
    <scope>FUNCTION</scope>
    <scope>DISRUPTION PHENOTYPE</scope>
    <scope>TISSUE SPECIFICITY</scope>
</reference>
<accession>Q94BT0</accession>
<accession>Q0WLS7</accession>
<feature type="chain" id="PRO_0000413637" description="Sucrose-phosphate synthase 1">
    <location>
        <begin position="1"/>
        <end position="1043"/>
    </location>
</feature>
<feature type="region of interest" description="Disordered" evidence="2">
    <location>
        <begin position="95"/>
        <end position="127"/>
    </location>
</feature>
<feature type="region of interest" description="Disordered" evidence="2">
    <location>
        <begin position="670"/>
        <end position="693"/>
    </location>
</feature>
<feature type="compositionally biased region" description="Basic and acidic residues" evidence="2">
    <location>
        <begin position="95"/>
        <end position="117"/>
    </location>
</feature>
<feature type="modified residue" description="Phosphoserine" evidence="11">
    <location>
        <position position="121"/>
    </location>
</feature>
<feature type="modified residue" description="Phosphoserine" evidence="11">
    <location>
        <position position="125"/>
    </location>
</feature>
<feature type="modified residue" description="Phosphoserine" evidence="7 10 11">
    <location>
        <position position="152"/>
    </location>
</feature>
<feature type="modified residue" description="Phosphoserine" evidence="10">
    <location>
        <position position="155"/>
    </location>
</feature>
<feature type="sequence conflict" description="In Ref. 4; BAF01930." evidence="8" ref="4">
    <original>I</original>
    <variation>V</variation>
    <location>
        <position position="874"/>
    </location>
</feature>
<gene>
    <name type="primary">SPS1</name>
    <name type="synonym">SPSA1</name>
    <name type="ordered locus">At5g20280</name>
    <name type="ORF">F5O24.170</name>
</gene>
<sequence length="1043" mass="117321">MAGNDWVNSYLEAILDVGQGLDDARSSPSLLLRERGRFTPSRYFVEEVITGYDETDLHRSWVKAVATRSPQERNTRLENMCWRIWNLARQKKQHEEKEAQRLAKRRLEREKGRREATADMSEEFSEGEKGDIISDISTHGESTKPRLPRINSAESMELWASQQKGNKLYLVLISLHGLIRGENMELGRDSDTGGQVKYVVELARALGSMPGVYRVDLLTRQVSSPDVDYSYGEPTEMLTPRDSEDFSDEMGESSGAYIVRIPFGPKDKYIPKELLWPHIPEFVDGAMSHIMQMSNVLGEQVGVGKPIWPSAIHGHYADAGDATALLSGALNVPMLLTGHSLGRDKLEQLLRQGRLSKEEINSTYKIMRRIEGEELSLDVSEMVITSTRQEIDEQWRLYDGFDPILERKLRARIKRNVSCYGRFMPRMVKIPPGMEFNHIVPHGGDMEDTDGNEEHPTSPDPPIWAEIMRFFSNSRKPMILALARPDPKKNITTLVKAFGECRPLRELANLALIMGNRDGIDEMSSTSSSVLLSVLKLIDKYDLYGQVAYPKHHKQSDVPDIYRLAAKSKGVFINPAIIEPFGLTLIEAAAHGLPMVATKNGGPVDIHRVLDNGLLVDPHDQQSISEALLKLVADKHLWAKCRQNGLKNIHQFSWPEHCKTYLSRITSFKPRHPQWQSDDGGDNSEPESPSDSLRDIQDISLNLKFSFDGSGNDNYMNQEGSSMDRKSKIEAAVQNWSKGKDSRKMGSLERSEVNSGKFPAVRRRKFIVVIALDFDGEEDTLEATKRILDAVEKERAEGSVGFILSTSLTISEVQSFLVSGGLNPNDFDAFICNSGSDLHYTSLNNEDGPFVVDFYYHSHIEYRWGGEGLRKTLIRWASSLNEKKADNDEQIVTLAEHLSTDYCYTFTVKKPAAVPPVRELRKLLRIQALRCHVVYSQNGTRINVIPVLASRIQALRYLFVRWGIDMAKMAVFVGESGDTDYEGLLGGLHKSVVLKGVSCSACLHANRSYPLTDVISFESNNVVHASPDSDVRDALKKLELLKD</sequence>
<keyword id="KW-0328">Glycosyltransferase</keyword>
<keyword id="KW-0597">Phosphoprotein</keyword>
<keyword id="KW-1185">Reference proteome</keyword>
<keyword id="KW-0808">Transferase</keyword>
<name>SPSA1_ARATH</name>